<reference key="1">
    <citation type="journal article" date="2004" name="Proc. Natl. Acad. Sci. U.S.A.">
        <title>Genome sequence of the enterobacterial phytopathogen Erwinia carotovora subsp. atroseptica and characterization of virulence factors.</title>
        <authorList>
            <person name="Bell K.S."/>
            <person name="Sebaihia M."/>
            <person name="Pritchard L."/>
            <person name="Holden M.T.G."/>
            <person name="Hyman L.J."/>
            <person name="Holeva M.C."/>
            <person name="Thomson N.R."/>
            <person name="Bentley S.D."/>
            <person name="Churcher L.J.C."/>
            <person name="Mungall K."/>
            <person name="Atkin R."/>
            <person name="Bason N."/>
            <person name="Brooks K."/>
            <person name="Chillingworth T."/>
            <person name="Clark K."/>
            <person name="Doggett J."/>
            <person name="Fraser A."/>
            <person name="Hance Z."/>
            <person name="Hauser H."/>
            <person name="Jagels K."/>
            <person name="Moule S."/>
            <person name="Norbertczak H."/>
            <person name="Ormond D."/>
            <person name="Price C."/>
            <person name="Quail M.A."/>
            <person name="Sanders M."/>
            <person name="Walker D."/>
            <person name="Whitehead S."/>
            <person name="Salmond G.P.C."/>
            <person name="Birch P.R.J."/>
            <person name="Parkhill J."/>
            <person name="Toth I.K."/>
        </authorList>
    </citation>
    <scope>NUCLEOTIDE SEQUENCE [LARGE SCALE GENOMIC DNA]</scope>
    <source>
        <strain>SCRI 1043 / ATCC BAA-672</strain>
    </source>
</reference>
<accession>Q6D9G1</accession>
<feature type="chain" id="PRO_0000366453" description="Ribosomal RNA large subunit methyltransferase G">
    <location>
        <begin position="1"/>
        <end position="379"/>
    </location>
</feature>
<comment type="function">
    <text evidence="1">Specifically methylates the guanine in position 1835 (m2G1835) of 23S rRNA.</text>
</comment>
<comment type="catalytic activity">
    <reaction evidence="1">
        <text>guanosine(1835) in 23S rRNA + S-adenosyl-L-methionine = N(2)-methylguanosine(1835) in 23S rRNA + S-adenosyl-L-homocysteine + H(+)</text>
        <dbReference type="Rhea" id="RHEA:42744"/>
        <dbReference type="Rhea" id="RHEA-COMP:10217"/>
        <dbReference type="Rhea" id="RHEA-COMP:10218"/>
        <dbReference type="ChEBI" id="CHEBI:15378"/>
        <dbReference type="ChEBI" id="CHEBI:57856"/>
        <dbReference type="ChEBI" id="CHEBI:59789"/>
        <dbReference type="ChEBI" id="CHEBI:74269"/>
        <dbReference type="ChEBI" id="CHEBI:74481"/>
        <dbReference type="EC" id="2.1.1.174"/>
    </reaction>
</comment>
<comment type="subcellular location">
    <subcellularLocation>
        <location evidence="1">Cytoplasm</location>
    </subcellularLocation>
</comment>
<comment type="similarity">
    <text evidence="1">Belongs to the methyltransferase superfamily. RlmG family.</text>
</comment>
<sequence>MSQLELETCNLTLVRYPQVAENSALQAWDAADEYLLRELSTMEIAPGPRLIFNDTFGALACGLQAQSPVSISDSYLSQLATRHNLELNGYDADAVTLLDSMADLPDAPALVVMRIPKTIALLEHQLRMLRKVVTPQTRIIAGAKARDIHTSTLQLFERVMGPTKTSLAWKKARLVHCEWAELKVSEQSLTTEWELDGYGYRIQNHANVYSRNGLDIGARFFMQHLPEQIDGKIIDLGCGNGVIGLAALEANPDATVGFFDESYMAVASSQMNVEVNRPQDVERCSFVVNNGLSRVRRDTLQAVLCNPPFHQLQAVTDEIAWQMFMDARRCLQVGGELRIVGNRHLDYFHKLKRLFGNCETIASNTKFAVLRAVKTNSSR</sequence>
<protein>
    <recommendedName>
        <fullName evidence="1">Ribosomal RNA large subunit methyltransferase G</fullName>
        <ecNumber evidence="1">2.1.1.174</ecNumber>
    </recommendedName>
    <alternativeName>
        <fullName evidence="1">23S rRNA m2G1835 methyltransferase</fullName>
    </alternativeName>
    <alternativeName>
        <fullName evidence="1">rRNA (guanine-N(2)-)-methyltransferase RlmG</fullName>
    </alternativeName>
</protein>
<name>RLMG_PECAS</name>
<gene>
    <name evidence="1" type="primary">rlmG</name>
    <name type="ordered locus">ECA0654</name>
</gene>
<proteinExistence type="inferred from homology"/>
<evidence type="ECO:0000255" key="1">
    <source>
        <dbReference type="HAMAP-Rule" id="MF_01859"/>
    </source>
</evidence>
<dbReference type="EC" id="2.1.1.174" evidence="1"/>
<dbReference type="EMBL" id="BX950851">
    <property type="protein sequence ID" value="CAG73569.1"/>
    <property type="molecule type" value="Genomic_DNA"/>
</dbReference>
<dbReference type="RefSeq" id="WP_011092271.1">
    <property type="nucleotide sequence ID" value="NC_004547.2"/>
</dbReference>
<dbReference type="SMR" id="Q6D9G1"/>
<dbReference type="STRING" id="218491.ECA0654"/>
<dbReference type="KEGG" id="eca:ECA0654"/>
<dbReference type="PATRIC" id="fig|218491.5.peg.649"/>
<dbReference type="eggNOG" id="COG2813">
    <property type="taxonomic scope" value="Bacteria"/>
</dbReference>
<dbReference type="HOGENOM" id="CLU_040288_4_0_6"/>
<dbReference type="OrthoDB" id="29650at2"/>
<dbReference type="Proteomes" id="UP000007966">
    <property type="component" value="Chromosome"/>
</dbReference>
<dbReference type="GO" id="GO:0005737">
    <property type="term" value="C:cytoplasm"/>
    <property type="evidence" value="ECO:0007669"/>
    <property type="project" value="UniProtKB-SubCell"/>
</dbReference>
<dbReference type="GO" id="GO:0052916">
    <property type="term" value="F:23S rRNA (guanine(1835)-N(2))-methyltransferase activity"/>
    <property type="evidence" value="ECO:0007669"/>
    <property type="project" value="UniProtKB-EC"/>
</dbReference>
<dbReference type="CDD" id="cd02440">
    <property type="entry name" value="AdoMet_MTases"/>
    <property type="match status" value="1"/>
</dbReference>
<dbReference type="Gene3D" id="3.40.50.150">
    <property type="entry name" value="Vaccinia Virus protein VP39"/>
    <property type="match status" value="2"/>
</dbReference>
<dbReference type="HAMAP" id="MF_01859">
    <property type="entry name" value="23SrRNA_methyltr_G"/>
    <property type="match status" value="1"/>
</dbReference>
<dbReference type="InterPro" id="IPR017237">
    <property type="entry name" value="rRNA_m2G-MeTrfase_RlmG"/>
</dbReference>
<dbReference type="InterPro" id="IPR046977">
    <property type="entry name" value="RsmC/RlmG"/>
</dbReference>
<dbReference type="InterPro" id="IPR029063">
    <property type="entry name" value="SAM-dependent_MTases_sf"/>
</dbReference>
<dbReference type="InterPro" id="IPR007848">
    <property type="entry name" value="Small_mtfrase_dom"/>
</dbReference>
<dbReference type="NCBIfam" id="NF011577">
    <property type="entry name" value="PRK15001.1"/>
    <property type="match status" value="1"/>
</dbReference>
<dbReference type="PANTHER" id="PTHR47816:SF5">
    <property type="entry name" value="RIBOSOMAL RNA LARGE SUBUNIT METHYLTRANSFERASE G"/>
    <property type="match status" value="1"/>
</dbReference>
<dbReference type="PANTHER" id="PTHR47816">
    <property type="entry name" value="RIBOSOMAL RNA SMALL SUBUNIT METHYLTRANSFERASE C"/>
    <property type="match status" value="1"/>
</dbReference>
<dbReference type="Pfam" id="PF05175">
    <property type="entry name" value="MTS"/>
    <property type="match status" value="1"/>
</dbReference>
<dbReference type="PIRSF" id="PIRSF037565">
    <property type="entry name" value="RRNA_m2G_Mtase_RsmD_prd"/>
    <property type="match status" value="1"/>
</dbReference>
<dbReference type="SUPFAM" id="SSF53335">
    <property type="entry name" value="S-adenosyl-L-methionine-dependent methyltransferases"/>
    <property type="match status" value="1"/>
</dbReference>
<organism>
    <name type="scientific">Pectobacterium atrosepticum (strain SCRI 1043 / ATCC BAA-672)</name>
    <name type="common">Erwinia carotovora subsp. atroseptica</name>
    <dbReference type="NCBI Taxonomy" id="218491"/>
    <lineage>
        <taxon>Bacteria</taxon>
        <taxon>Pseudomonadati</taxon>
        <taxon>Pseudomonadota</taxon>
        <taxon>Gammaproteobacteria</taxon>
        <taxon>Enterobacterales</taxon>
        <taxon>Pectobacteriaceae</taxon>
        <taxon>Pectobacterium</taxon>
    </lineage>
</organism>
<keyword id="KW-0963">Cytoplasm</keyword>
<keyword id="KW-0489">Methyltransferase</keyword>
<keyword id="KW-1185">Reference proteome</keyword>
<keyword id="KW-0698">rRNA processing</keyword>
<keyword id="KW-0949">S-adenosyl-L-methionine</keyword>
<keyword id="KW-0808">Transferase</keyword>